<organism>
    <name type="scientific">Kluyveromyces lactis (strain ATCC 8585 / CBS 2359 / DSM 70799 / NBRC 1267 / NRRL Y-1140 / WM37)</name>
    <name type="common">Yeast</name>
    <name type="synonym">Candida sphaerica</name>
    <dbReference type="NCBI Taxonomy" id="284590"/>
    <lineage>
        <taxon>Eukaryota</taxon>
        <taxon>Fungi</taxon>
        <taxon>Dikarya</taxon>
        <taxon>Ascomycota</taxon>
        <taxon>Saccharomycotina</taxon>
        <taxon>Saccharomycetes</taxon>
        <taxon>Saccharomycetales</taxon>
        <taxon>Saccharomycetaceae</taxon>
        <taxon>Kluyveromyces</taxon>
    </lineage>
</organism>
<accession>Q9HGI8</accession>
<accession>Q6CQF8</accession>
<dbReference type="EMBL" id="AB039749">
    <property type="protein sequence ID" value="BAB12680.1"/>
    <property type="molecule type" value="Genomic_DNA"/>
</dbReference>
<dbReference type="EMBL" id="CR382124">
    <property type="protein sequence ID" value="CAH00927.1"/>
    <property type="molecule type" value="Genomic_DNA"/>
</dbReference>
<dbReference type="RefSeq" id="XP_453831.1">
    <property type="nucleotide sequence ID" value="XM_453831.1"/>
</dbReference>
<dbReference type="SMR" id="Q9HGI8"/>
<dbReference type="FunCoup" id="Q9HGI8">
    <property type="interactions" value="970"/>
</dbReference>
<dbReference type="STRING" id="284590.Q9HGI8"/>
<dbReference type="PaxDb" id="284590-Q9HGI8"/>
<dbReference type="KEGG" id="kla:KLLA0_D17424g"/>
<dbReference type="eggNOG" id="KOG0459">
    <property type="taxonomic scope" value="Eukaryota"/>
</dbReference>
<dbReference type="HOGENOM" id="CLU_007265_3_8_1"/>
<dbReference type="InParanoid" id="Q9HGI8"/>
<dbReference type="OMA" id="TNESVCA"/>
<dbReference type="Proteomes" id="UP000000598">
    <property type="component" value="Chromosome D"/>
</dbReference>
<dbReference type="GO" id="GO:0005737">
    <property type="term" value="C:cytoplasm"/>
    <property type="evidence" value="ECO:0007669"/>
    <property type="project" value="UniProtKB-SubCell"/>
</dbReference>
<dbReference type="GO" id="GO:0005525">
    <property type="term" value="F:GTP binding"/>
    <property type="evidence" value="ECO:0007669"/>
    <property type="project" value="UniProtKB-KW"/>
</dbReference>
<dbReference type="GO" id="GO:0003924">
    <property type="term" value="F:GTPase activity"/>
    <property type="evidence" value="ECO:0007669"/>
    <property type="project" value="InterPro"/>
</dbReference>
<dbReference type="GO" id="GO:0003747">
    <property type="term" value="F:translation release factor activity"/>
    <property type="evidence" value="ECO:0007669"/>
    <property type="project" value="InterPro"/>
</dbReference>
<dbReference type="GO" id="GO:0000288">
    <property type="term" value="P:nuclear-transcribed mRNA catabolic process, deadenylation-dependent decay"/>
    <property type="evidence" value="ECO:0007669"/>
    <property type="project" value="InterPro"/>
</dbReference>
<dbReference type="GO" id="GO:0006417">
    <property type="term" value="P:regulation of translation"/>
    <property type="evidence" value="ECO:0007669"/>
    <property type="project" value="UniProtKB-ARBA"/>
</dbReference>
<dbReference type="CDD" id="cd01883">
    <property type="entry name" value="EF1_alpha"/>
    <property type="match status" value="1"/>
</dbReference>
<dbReference type="CDD" id="cd03704">
    <property type="entry name" value="eRF3_C_III"/>
    <property type="match status" value="1"/>
</dbReference>
<dbReference type="CDD" id="cd04089">
    <property type="entry name" value="eRF3_II"/>
    <property type="match status" value="1"/>
</dbReference>
<dbReference type="FunFam" id="2.40.30.10:FF:000017">
    <property type="entry name" value="Eukaryotic peptide chain release factor GTP-binding subunit"/>
    <property type="match status" value="1"/>
</dbReference>
<dbReference type="FunFam" id="3.40.50.300:FF:000503">
    <property type="entry name" value="Peptide chain release factor subunit 3"/>
    <property type="match status" value="1"/>
</dbReference>
<dbReference type="FunFam" id="2.40.30.10:FF:000061">
    <property type="entry name" value="Translation release factor eRF3, putative"/>
    <property type="match status" value="1"/>
</dbReference>
<dbReference type="Gene3D" id="3.40.50.300">
    <property type="entry name" value="P-loop containing nucleotide triphosphate hydrolases"/>
    <property type="match status" value="1"/>
</dbReference>
<dbReference type="Gene3D" id="2.40.30.10">
    <property type="entry name" value="Translation factors"/>
    <property type="match status" value="2"/>
</dbReference>
<dbReference type="InterPro" id="IPR004161">
    <property type="entry name" value="EFTu-like_2"/>
</dbReference>
<dbReference type="InterPro" id="IPR031157">
    <property type="entry name" value="G_TR_CS"/>
</dbReference>
<dbReference type="InterPro" id="IPR054696">
    <property type="entry name" value="GTP-eEF1A_C"/>
</dbReference>
<dbReference type="InterPro" id="IPR027417">
    <property type="entry name" value="P-loop_NTPase"/>
</dbReference>
<dbReference type="InterPro" id="IPR003285">
    <property type="entry name" value="Sup35"/>
</dbReference>
<dbReference type="InterPro" id="IPR000795">
    <property type="entry name" value="T_Tr_GTP-bd_dom"/>
</dbReference>
<dbReference type="InterPro" id="IPR050100">
    <property type="entry name" value="TRAFAC_GTPase_members"/>
</dbReference>
<dbReference type="InterPro" id="IPR009000">
    <property type="entry name" value="Transl_B-barrel_sf"/>
</dbReference>
<dbReference type="InterPro" id="IPR009001">
    <property type="entry name" value="Transl_elong_EF1A/Init_IF2_C"/>
</dbReference>
<dbReference type="PANTHER" id="PTHR23115">
    <property type="entry name" value="TRANSLATION FACTOR"/>
    <property type="match status" value="1"/>
</dbReference>
<dbReference type="Pfam" id="PF22594">
    <property type="entry name" value="GTP-eEF1A_C"/>
    <property type="match status" value="1"/>
</dbReference>
<dbReference type="Pfam" id="PF00009">
    <property type="entry name" value="GTP_EFTU"/>
    <property type="match status" value="1"/>
</dbReference>
<dbReference type="Pfam" id="PF03144">
    <property type="entry name" value="GTP_EFTU_D2"/>
    <property type="match status" value="1"/>
</dbReference>
<dbReference type="PRINTS" id="PR00315">
    <property type="entry name" value="ELONGATNFCT"/>
</dbReference>
<dbReference type="PRINTS" id="PR01343">
    <property type="entry name" value="YEASTERF"/>
</dbReference>
<dbReference type="SUPFAM" id="SSF50465">
    <property type="entry name" value="EF-Tu/eEF-1alpha/eIF2-gamma C-terminal domain"/>
    <property type="match status" value="1"/>
</dbReference>
<dbReference type="SUPFAM" id="SSF52540">
    <property type="entry name" value="P-loop containing nucleoside triphosphate hydrolases"/>
    <property type="match status" value="1"/>
</dbReference>
<dbReference type="SUPFAM" id="SSF50447">
    <property type="entry name" value="Translation proteins"/>
    <property type="match status" value="1"/>
</dbReference>
<dbReference type="PROSITE" id="PS00301">
    <property type="entry name" value="G_TR_1"/>
    <property type="match status" value="1"/>
</dbReference>
<dbReference type="PROSITE" id="PS51722">
    <property type="entry name" value="G_TR_2"/>
    <property type="match status" value="1"/>
</dbReference>
<proteinExistence type="inferred from homology"/>
<keyword id="KW-0963">Cytoplasm</keyword>
<keyword id="KW-0342">GTP-binding</keyword>
<keyword id="KW-0547">Nucleotide-binding</keyword>
<keyword id="KW-0597">Phosphoprotein</keyword>
<keyword id="KW-0648">Protein biosynthesis</keyword>
<keyword id="KW-1185">Reference proteome</keyword>
<keyword id="KW-0677">Repeat</keyword>
<gene>
    <name type="primary">SUP35</name>
    <name type="ordered locus">KLLA0D17424g</name>
</gene>
<sequence>MSDQQNQDQGQGQGYNQYNQYGQYNQYYNQQGYQGYNGQQGAPQGYQAYQAYGQQPQGAYQGYNPQQAQGYQPYQGYNAQQQGYNAQQGGHNNNYNKNYNNKNSYNNYNKQGYQGAQGYNAQQPTGYAAPAQSSSQGMTLKDFQNQQGSTNAAKPKPKLKLASSSGIKLVGAKKPVAPKTEKTDESKEATKTTDDNEEAQSELPKIDDLKISEAEKPKTKENTPSADDTSSEKTTSAKADTSTGGANSVDALIKEQEDEVDEEVVKDMFGGKDHVSIIFMGHVDAGKSTMGGNLLYLTGSVDKRTVEKYEREAKEAGRQGWYLSWVMDTNKEERNDGKTIEVGRAYFETEKRRYTILDAPGHKMYVSEMIGGASQADIGILVISARKGEYETGFEKGGQTREHALLAKTQGVNKMIVVINKMDDPTVGWDKERYDHCVGNLTNFLKAVGYNVKEDVIFMPVSGYTGAGLKERVDPKDCPWYTGPSLLEYLDNMKTTDRHINAPFMLPIASKMKDMGTVVEGKIESGHIRKGNQTLLMPNRTSVEILTIYNETESEVDMAVCGEQVRLRIKGVEEEEISAGFVLTSPKNPVKNVTRFVAQIAIVELKSIMSAGFSCVMHIHTAIEEVTVTRLLHKLEKGSNRKSKKPPAFAKKGMKIIAVIETNEPVCVETYDDYPQLGRFTLRDQGTTIAIGKIVKILEN</sequence>
<reference key="1">
    <citation type="journal article" date="2001" name="Mol. Cell">
        <title>Yeast [PSI+] 'prions' that are crosstransmissible and susceptible beyond a species barrier through a quasi-prion state.</title>
        <authorList>
            <person name="Nakayashiki T."/>
            <person name="Ebihara K."/>
            <person name="Bannai H."/>
            <person name="Nakamura Y."/>
        </authorList>
    </citation>
    <scope>NUCLEOTIDE SEQUENCE [GENOMIC DNA]</scope>
</reference>
<reference key="2">
    <citation type="journal article" date="2004" name="Nature">
        <title>Genome evolution in yeasts.</title>
        <authorList>
            <person name="Dujon B."/>
            <person name="Sherman D."/>
            <person name="Fischer G."/>
            <person name="Durrens P."/>
            <person name="Casaregola S."/>
            <person name="Lafontaine I."/>
            <person name="de Montigny J."/>
            <person name="Marck C."/>
            <person name="Neuveglise C."/>
            <person name="Talla E."/>
            <person name="Goffard N."/>
            <person name="Frangeul L."/>
            <person name="Aigle M."/>
            <person name="Anthouard V."/>
            <person name="Babour A."/>
            <person name="Barbe V."/>
            <person name="Barnay S."/>
            <person name="Blanchin S."/>
            <person name="Beckerich J.-M."/>
            <person name="Beyne E."/>
            <person name="Bleykasten C."/>
            <person name="Boisrame A."/>
            <person name="Boyer J."/>
            <person name="Cattolico L."/>
            <person name="Confanioleri F."/>
            <person name="de Daruvar A."/>
            <person name="Despons L."/>
            <person name="Fabre E."/>
            <person name="Fairhead C."/>
            <person name="Ferry-Dumazet H."/>
            <person name="Groppi A."/>
            <person name="Hantraye F."/>
            <person name="Hennequin C."/>
            <person name="Jauniaux N."/>
            <person name="Joyet P."/>
            <person name="Kachouri R."/>
            <person name="Kerrest A."/>
            <person name="Koszul R."/>
            <person name="Lemaire M."/>
            <person name="Lesur I."/>
            <person name="Ma L."/>
            <person name="Muller H."/>
            <person name="Nicaud J.-M."/>
            <person name="Nikolski M."/>
            <person name="Oztas S."/>
            <person name="Ozier-Kalogeropoulos O."/>
            <person name="Pellenz S."/>
            <person name="Potier S."/>
            <person name="Richard G.-F."/>
            <person name="Straub M.-L."/>
            <person name="Suleau A."/>
            <person name="Swennen D."/>
            <person name="Tekaia F."/>
            <person name="Wesolowski-Louvel M."/>
            <person name="Westhof E."/>
            <person name="Wirth B."/>
            <person name="Zeniou-Meyer M."/>
            <person name="Zivanovic Y."/>
            <person name="Bolotin-Fukuhara M."/>
            <person name="Thierry A."/>
            <person name="Bouchier C."/>
            <person name="Caudron B."/>
            <person name="Scarpelli C."/>
            <person name="Gaillardin C."/>
            <person name="Weissenbach J."/>
            <person name="Wincker P."/>
            <person name="Souciet J.-L."/>
        </authorList>
    </citation>
    <scope>NUCLEOTIDE SEQUENCE [LARGE SCALE GENOMIC DNA]</scope>
    <source>
        <strain>ATCC 8585 / CBS 2359 / DSM 70799 / NBRC 1267 / NRRL Y-1140 / WM37</strain>
    </source>
</reference>
<name>ERF3_KLULA</name>
<protein>
    <recommendedName>
        <fullName>Eukaryotic peptide chain release factor GTP-binding subunit</fullName>
    </recommendedName>
    <alternativeName>
        <fullName>ERF-3</fullName>
        <shortName>ERF3</shortName>
    </alternativeName>
    <alternativeName>
        <fullName>ERF2</fullName>
    </alternativeName>
    <alternativeName>
        <fullName>Polypeptide release factor 3</fullName>
    </alternativeName>
    <alternativeName>
        <fullName>Translation release factor 3</fullName>
    </alternativeName>
</protein>
<evidence type="ECO:0000250" key="1"/>
<evidence type="ECO:0000255" key="2">
    <source>
        <dbReference type="PROSITE-ProRule" id="PRU01059"/>
    </source>
</evidence>
<evidence type="ECO:0000256" key="3">
    <source>
        <dbReference type="SAM" id="MobiDB-lite"/>
    </source>
</evidence>
<evidence type="ECO:0000305" key="4"/>
<feature type="chain" id="PRO_0000091486" description="Eukaryotic peptide chain release factor GTP-binding subunit">
    <location>
        <begin position="1"/>
        <end position="700"/>
    </location>
</feature>
<feature type="domain" description="tr-type G" evidence="2">
    <location>
        <begin position="272"/>
        <end position="498"/>
    </location>
</feature>
<feature type="region of interest" description="Several sort of repeats">
    <location>
        <begin position="10"/>
        <end position="136"/>
    </location>
</feature>
<feature type="region of interest" description="Disordered" evidence="3">
    <location>
        <begin position="114"/>
        <end position="250"/>
    </location>
</feature>
<feature type="region of interest" description="Charged">
    <location>
        <begin position="137"/>
        <end position="267"/>
    </location>
</feature>
<feature type="region of interest" description="G1" evidence="2">
    <location>
        <begin position="281"/>
        <end position="288"/>
    </location>
</feature>
<feature type="region of interest" description="G2" evidence="2">
    <location>
        <begin position="337"/>
        <end position="341"/>
    </location>
</feature>
<feature type="region of interest" description="G3" evidence="2">
    <location>
        <begin position="358"/>
        <end position="361"/>
    </location>
</feature>
<feature type="region of interest" description="G4" evidence="2">
    <location>
        <begin position="420"/>
        <end position="423"/>
    </location>
</feature>
<feature type="region of interest" description="G5" evidence="2">
    <location>
        <begin position="462"/>
        <end position="464"/>
    </location>
</feature>
<feature type="compositionally biased region" description="Low complexity" evidence="3">
    <location>
        <begin position="114"/>
        <end position="123"/>
    </location>
</feature>
<feature type="compositionally biased region" description="Polar residues" evidence="3">
    <location>
        <begin position="131"/>
        <end position="151"/>
    </location>
</feature>
<feature type="compositionally biased region" description="Basic and acidic residues" evidence="3">
    <location>
        <begin position="179"/>
        <end position="194"/>
    </location>
</feature>
<feature type="compositionally biased region" description="Basic and acidic residues" evidence="3">
    <location>
        <begin position="204"/>
        <end position="221"/>
    </location>
</feature>
<feature type="compositionally biased region" description="Polar residues" evidence="3">
    <location>
        <begin position="222"/>
        <end position="246"/>
    </location>
</feature>
<feature type="binding site" evidence="1">
    <location>
        <begin position="281"/>
        <end position="288"/>
    </location>
    <ligand>
        <name>GTP</name>
        <dbReference type="ChEBI" id="CHEBI:37565"/>
    </ligand>
</feature>
<feature type="binding site" evidence="1">
    <location>
        <begin position="358"/>
        <end position="362"/>
    </location>
    <ligand>
        <name>GTP</name>
        <dbReference type="ChEBI" id="CHEBI:37565"/>
    </ligand>
</feature>
<feature type="binding site" evidence="1">
    <location>
        <begin position="420"/>
        <end position="423"/>
    </location>
    <ligand>
        <name>GTP</name>
        <dbReference type="ChEBI" id="CHEBI:37565"/>
    </ligand>
</feature>
<feature type="modified residue" description="Phosphothreonine" evidence="1">
    <location>
        <position position="355"/>
    </location>
</feature>
<comment type="function">
    <text>Involved in translation termination. Stimulates the activity of ERF1. Binds guanine nucleotides.</text>
</comment>
<comment type="subcellular location">
    <subcellularLocation>
        <location evidence="4">Cytoplasm</location>
    </subcellularLocation>
</comment>
<comment type="similarity">
    <text evidence="2">Belongs to the TRAFAC class translation factor GTPase superfamily. Classic translation factor GTPase family. ERF3 subfamily.</text>
</comment>